<dbReference type="EC" id="7.1.1.8" evidence="1"/>
<dbReference type="EMBL" id="CP017624">
    <property type="protein sequence ID" value="AOW27514.1"/>
    <property type="molecule type" value="Genomic_DNA"/>
</dbReference>
<dbReference type="RefSeq" id="XP_714886.1">
    <property type="nucleotide sequence ID" value="XM_709793.2"/>
</dbReference>
<dbReference type="PDB" id="7RJA">
    <property type="method" value="EM"/>
    <property type="resolution" value="3.00 A"/>
    <property type="chains" value="D/N=1-288"/>
</dbReference>
<dbReference type="PDB" id="7RJB">
    <property type="method" value="EM"/>
    <property type="resolution" value="3.20 A"/>
    <property type="chains" value="D=1-288"/>
</dbReference>
<dbReference type="PDB" id="7RJC">
    <property type="method" value="EM"/>
    <property type="resolution" value="3.30 A"/>
    <property type="chains" value="D=1-288"/>
</dbReference>
<dbReference type="PDB" id="7RJD">
    <property type="method" value="EM"/>
    <property type="resolution" value="3.20 A"/>
    <property type="chains" value="D=1-288"/>
</dbReference>
<dbReference type="PDB" id="7RJE">
    <property type="method" value="EM"/>
    <property type="resolution" value="3.30 A"/>
    <property type="chains" value="D/N=1-288"/>
</dbReference>
<dbReference type="PDBsum" id="7RJA"/>
<dbReference type="PDBsum" id="7RJB"/>
<dbReference type="PDBsum" id="7RJC"/>
<dbReference type="PDBsum" id="7RJD"/>
<dbReference type="PDBsum" id="7RJE"/>
<dbReference type="EMDB" id="EMD-24482"/>
<dbReference type="EMDB" id="EMD-24483"/>
<dbReference type="EMDB" id="EMD-24484"/>
<dbReference type="EMDB" id="EMD-24485"/>
<dbReference type="EMDB" id="EMD-24486"/>
<dbReference type="SMR" id="A0A1D8PHA3"/>
<dbReference type="FunCoup" id="A0A1D8PHA3">
    <property type="interactions" value="714"/>
</dbReference>
<dbReference type="STRING" id="237561.A0A1D8PHA3"/>
<dbReference type="EnsemblFungi" id="C2_04950C_A-T">
    <property type="protein sequence ID" value="C2_04950C_A-T-p1"/>
    <property type="gene ID" value="C2_04950C_A"/>
</dbReference>
<dbReference type="GeneID" id="3643441"/>
<dbReference type="KEGG" id="cal:CAALFM_C204950CA"/>
<dbReference type="CGD" id="CAL0000192434">
    <property type="gene designation" value="CYT1"/>
</dbReference>
<dbReference type="VEuPathDB" id="FungiDB:C2_04950C_A"/>
<dbReference type="eggNOG" id="KOG3052">
    <property type="taxonomic scope" value="Eukaryota"/>
</dbReference>
<dbReference type="InParanoid" id="A0A1D8PHA3"/>
<dbReference type="OMA" id="WVKKFKW"/>
<dbReference type="OrthoDB" id="5925at2759"/>
<dbReference type="Proteomes" id="UP000000559">
    <property type="component" value="Chromosome 2"/>
</dbReference>
<dbReference type="GO" id="GO:0005743">
    <property type="term" value="C:mitochondrial inner membrane"/>
    <property type="evidence" value="ECO:0007669"/>
    <property type="project" value="UniProtKB-SubCell"/>
</dbReference>
<dbReference type="GO" id="GO:0005886">
    <property type="term" value="C:plasma membrane"/>
    <property type="evidence" value="ECO:0000314"/>
    <property type="project" value="CGD"/>
</dbReference>
<dbReference type="GO" id="GO:0045275">
    <property type="term" value="C:respiratory chain complex III"/>
    <property type="evidence" value="ECO:0000318"/>
    <property type="project" value="GO_Central"/>
</dbReference>
<dbReference type="GO" id="GO:0009055">
    <property type="term" value="F:electron transfer activity"/>
    <property type="evidence" value="ECO:0000303"/>
    <property type="project" value="CGD"/>
</dbReference>
<dbReference type="GO" id="GO:0020037">
    <property type="term" value="F:heme binding"/>
    <property type="evidence" value="ECO:0007669"/>
    <property type="project" value="InterPro"/>
</dbReference>
<dbReference type="GO" id="GO:0046872">
    <property type="term" value="F:metal ion binding"/>
    <property type="evidence" value="ECO:0007669"/>
    <property type="project" value="UniProtKB-KW"/>
</dbReference>
<dbReference type="GO" id="GO:0008121">
    <property type="term" value="F:ubiquinol-cytochrome-c reductase activity"/>
    <property type="evidence" value="ECO:0007669"/>
    <property type="project" value="EnsemblFungi"/>
</dbReference>
<dbReference type="GO" id="GO:0006122">
    <property type="term" value="P:mitochondrial electron transport, ubiquinol to cytochrome c"/>
    <property type="evidence" value="ECO:0000318"/>
    <property type="project" value="GO_Central"/>
</dbReference>
<dbReference type="FunFam" id="1.10.760.10:FF:000002">
    <property type="entry name" value="Cytochrome c1, heme protein"/>
    <property type="match status" value="1"/>
</dbReference>
<dbReference type="FunFam" id="1.20.5.100:FF:000003">
    <property type="entry name" value="Cytochrome c1, heme protein, mitochondrial"/>
    <property type="match status" value="1"/>
</dbReference>
<dbReference type="Gene3D" id="1.10.760.10">
    <property type="entry name" value="Cytochrome c-like domain"/>
    <property type="match status" value="1"/>
</dbReference>
<dbReference type="Gene3D" id="1.20.5.100">
    <property type="entry name" value="Cytochrome c1, transmembrane anchor, C-terminal"/>
    <property type="match status" value="1"/>
</dbReference>
<dbReference type="InterPro" id="IPR009056">
    <property type="entry name" value="Cyt_c-like_dom"/>
</dbReference>
<dbReference type="InterPro" id="IPR036909">
    <property type="entry name" value="Cyt_c-like_dom_sf"/>
</dbReference>
<dbReference type="InterPro" id="IPR002326">
    <property type="entry name" value="Cyt_c1"/>
</dbReference>
<dbReference type="InterPro" id="IPR021157">
    <property type="entry name" value="Cyt_c1_TM_anchor_C"/>
</dbReference>
<dbReference type="PANTHER" id="PTHR10266">
    <property type="entry name" value="CYTOCHROME C1"/>
    <property type="match status" value="1"/>
</dbReference>
<dbReference type="PANTHER" id="PTHR10266:SF3">
    <property type="entry name" value="CYTOCHROME C1, HEME PROTEIN, MITOCHONDRIAL"/>
    <property type="match status" value="1"/>
</dbReference>
<dbReference type="Pfam" id="PF02167">
    <property type="entry name" value="Cytochrom_C1"/>
    <property type="match status" value="1"/>
</dbReference>
<dbReference type="PRINTS" id="PR00603">
    <property type="entry name" value="CYTOCHROMEC1"/>
</dbReference>
<dbReference type="SUPFAM" id="SSF46626">
    <property type="entry name" value="Cytochrome c"/>
    <property type="match status" value="1"/>
</dbReference>
<dbReference type="SUPFAM" id="SSF81496">
    <property type="entry name" value="Cytochrome c1 subunit of cytochrome bc1 complex (Ubiquinol-cytochrome c reductase), transmembrane anchor"/>
    <property type="match status" value="1"/>
</dbReference>
<dbReference type="PROSITE" id="PS51007">
    <property type="entry name" value="CYTC"/>
    <property type="match status" value="1"/>
</dbReference>
<proteinExistence type="evidence at protein level"/>
<sequence length="288" mass="32221">MFRTAYKTMNQSMVQKFIAGGVGVTGLTASYLLYQDSMTADAMTAAEHGLHPPAYNWPHNGMFETFDHASIRRGFQVYREVCAACHSLDRIAWRNLVGVSHTTSEAKAMAEELEYDDEPDDEGKPRKRPGKLADYIPGPYENEQAARAANQGAYPPDLSLIVKARHGGSDYIFSLLTGYPDEPPAGVVLPEGSNYNPYFPGGAIAMGRVLFDDLVEYEDGTPATTSQMAKDVSTFLNWASEPEHDDRKKWGLKALVVLSSLYLLSIWVKRFKWTPIKNRKFRFDPPKK</sequence>
<comment type="function">
    <text evidence="9 10">Component of the ubiquinol-cytochrome c oxidoreductase, a multisubunit transmembrane complex that is part of the mitochondrial electron transport chain which drives oxidative phosphorylation (PubMed:34525326, PubMed:36923588). The complex plays an important role in the uptake of multiple carbon sources present in different host niches (PubMed:36923588).</text>
</comment>
<comment type="catalytic activity">
    <reaction evidence="1">
        <text>a quinol + 2 Fe(III)-[cytochrome c](out) = a quinone + 2 Fe(II)-[cytochrome c](out) + 2 H(+)(out)</text>
        <dbReference type="Rhea" id="RHEA:11484"/>
        <dbReference type="Rhea" id="RHEA-COMP:10350"/>
        <dbReference type="Rhea" id="RHEA-COMP:14399"/>
        <dbReference type="ChEBI" id="CHEBI:15378"/>
        <dbReference type="ChEBI" id="CHEBI:24646"/>
        <dbReference type="ChEBI" id="CHEBI:29033"/>
        <dbReference type="ChEBI" id="CHEBI:29034"/>
        <dbReference type="ChEBI" id="CHEBI:132124"/>
        <dbReference type="EC" id="7.1.1.8"/>
    </reaction>
</comment>
<comment type="cofactor">
    <cofactor evidence="1">
        <name>heme c</name>
        <dbReference type="ChEBI" id="CHEBI:61717"/>
    </cofactor>
    <text evidence="1">Binds 1 heme c group covalently per subunit.</text>
</comment>
<comment type="subunit">
    <text evidence="9">Component of the ubiquinol-cytochrome c oxidoreductase (cytochrome b-c1 complex, complex III, CIII), a multisubunit enzyme composed of 10 subunits. The complex is composed of 3 respiratory subunits cytochrome b (COB), cytochrome c1 (CYT1) and Rieske protein (RIP1), 2 core protein subunits COR1 and QCR2, and 5 low-molecular weight protein subunits QCR6, QCR7, QCR8, QCR9 and QCR10. The complex exists as an obligatory dimer and forms supercomplexes (SCs) in the inner mitochondrial membrane with a monomer or a dimer of cytochrome c oxidase (complex IV, CIV), resulting in 2 different assemblies (supercomplexes III(2)IV and III(2)IV(2)).</text>
</comment>
<comment type="subcellular location">
    <subcellularLocation>
        <location evidence="1">Mitochondrion inner membrane</location>
        <topology evidence="2">Multi-pass membrane protein</topology>
    </subcellularLocation>
</comment>
<comment type="induction">
    <text evidence="5 6 7 8">Expression is induced in high iron conditions (PubMed:15387822). Expression is repressed in alkaline conditions and during spider biofilm formation (PubMed:15554973, PubMed:22265407). Expression is also repressed by HAP43 (PubMed:21592964).</text>
</comment>
<comment type="disruption phenotype">
    <text evidence="10">Leads to lethality, showing that it is an essential gene.</text>
</comment>
<comment type="similarity">
    <text evidence="12">Belongs to the cytochrome c family.</text>
</comment>
<keyword id="KW-0002">3D-structure</keyword>
<keyword id="KW-0249">Electron transport</keyword>
<keyword id="KW-0349">Heme</keyword>
<keyword id="KW-0408">Iron</keyword>
<keyword id="KW-0472">Membrane</keyword>
<keyword id="KW-0479">Metal-binding</keyword>
<keyword id="KW-0496">Mitochondrion</keyword>
<keyword id="KW-0999">Mitochondrion inner membrane</keyword>
<keyword id="KW-1185">Reference proteome</keyword>
<keyword id="KW-0679">Respiratory chain</keyword>
<keyword id="KW-1278">Translocase</keyword>
<keyword id="KW-0812">Transmembrane</keyword>
<keyword id="KW-1133">Transmembrane helix</keyword>
<keyword id="KW-0813">Transport</keyword>
<reference key="1">
    <citation type="journal article" date="2004" name="Proc. Natl. Acad. Sci. U.S.A.">
        <title>The diploid genome sequence of Candida albicans.</title>
        <authorList>
            <person name="Jones T."/>
            <person name="Federspiel N.A."/>
            <person name="Chibana H."/>
            <person name="Dungan J."/>
            <person name="Kalman S."/>
            <person name="Magee B.B."/>
            <person name="Newport G."/>
            <person name="Thorstenson Y.R."/>
            <person name="Agabian N."/>
            <person name="Magee P.T."/>
            <person name="Davis R.W."/>
            <person name="Scherer S."/>
        </authorList>
    </citation>
    <scope>NUCLEOTIDE SEQUENCE [LARGE SCALE GENOMIC DNA]</scope>
    <source>
        <strain>SC5314 / ATCC MYA-2876</strain>
    </source>
</reference>
<reference key="2">
    <citation type="journal article" date="2007" name="Genome Biol.">
        <title>Assembly of the Candida albicans genome into sixteen supercontigs aligned on the eight chromosomes.</title>
        <authorList>
            <person name="van het Hoog M."/>
            <person name="Rast T.J."/>
            <person name="Martchenko M."/>
            <person name="Grindle S."/>
            <person name="Dignard D."/>
            <person name="Hogues H."/>
            <person name="Cuomo C."/>
            <person name="Berriman M."/>
            <person name="Scherer S."/>
            <person name="Magee B.B."/>
            <person name="Whiteway M."/>
            <person name="Chibana H."/>
            <person name="Nantel A."/>
            <person name="Magee P.T."/>
        </authorList>
    </citation>
    <scope>GENOME REANNOTATION</scope>
    <source>
        <strain>SC5314 / ATCC MYA-2876</strain>
    </source>
</reference>
<reference key="3">
    <citation type="journal article" date="2013" name="Genome Biol.">
        <title>Assembly of a phased diploid Candida albicans genome facilitates allele-specific measurements and provides a simple model for repeat and indel structure.</title>
        <authorList>
            <person name="Muzzey D."/>
            <person name="Schwartz K."/>
            <person name="Weissman J.S."/>
            <person name="Sherlock G."/>
        </authorList>
    </citation>
    <scope>NUCLEOTIDE SEQUENCE [LARGE SCALE GENOMIC DNA]</scope>
    <scope>GENOME REANNOTATION</scope>
    <source>
        <strain>SC5314 / ATCC MYA-2876</strain>
    </source>
</reference>
<reference key="4">
    <citation type="journal article" date="2004" name="Mol. Microbiol.">
        <title>Regulatory networks affected by iron availability in Candida albicans.</title>
        <authorList>
            <person name="Lan C.Y."/>
            <person name="Rodarte G."/>
            <person name="Murillo L.A."/>
            <person name="Jones T."/>
            <person name="Davis R.W."/>
            <person name="Dungan J."/>
            <person name="Newport G."/>
            <person name="Agabian N."/>
        </authorList>
    </citation>
    <scope>INDUCTION</scope>
</reference>
<reference key="5">
    <citation type="journal article" date="2004" name="Mol. Microbiol.">
        <title>Transcriptional profiling in Candida albicans reveals new adaptive responses to extracellular pH and functions for Rim101p.</title>
        <authorList>
            <person name="Bensen E.S."/>
            <person name="Martin S.J."/>
            <person name="Li M."/>
            <person name="Berman J."/>
            <person name="Davis D.A."/>
        </authorList>
    </citation>
    <scope>INDUCTION</scope>
</reference>
<reference key="6">
    <citation type="journal article" date="2011" name="J. Biol. Chem.">
        <title>Cap2-HAP complex is a critical transcriptional regulator that has dual but contrasting roles in regulation of iron homeostasis in Candida albicans.</title>
        <authorList>
            <person name="Singh R.P."/>
            <person name="Prasad H.K."/>
            <person name="Sinha I."/>
            <person name="Agarwal N."/>
            <person name="Natarajan K."/>
        </authorList>
    </citation>
    <scope>INDUCTION</scope>
</reference>
<reference key="7">
    <citation type="journal article" date="2012" name="Cell">
        <title>A recently evolved transcriptional network controls biofilm development in Candida albicans.</title>
        <authorList>
            <person name="Nobile C.J."/>
            <person name="Fox E.P."/>
            <person name="Nett J.E."/>
            <person name="Sorrells T.R."/>
            <person name="Mitrovich Q.M."/>
            <person name="Hernday A.D."/>
            <person name="Tuch B.B."/>
            <person name="Andes D.R."/>
            <person name="Johnson A.D."/>
        </authorList>
    </citation>
    <scope>INDUCTION</scope>
</reference>
<reference key="8">
    <citation type="journal article" date="2023" name="Front. Cell. Infect. Microbiol.">
        <title>QCR7 affects the virulence of Candida albicans and the uptake of multiple carbon sources present in different host niches.</title>
        <authorList>
            <person name="Zeng L."/>
            <person name="Huang Y."/>
            <person name="Tan J."/>
            <person name="Peng J."/>
            <person name="Hu N."/>
            <person name="Liu Q."/>
            <person name="Cao Y."/>
            <person name="Zhang Y."/>
            <person name="Chen J."/>
            <person name="Huang X."/>
        </authorList>
    </citation>
    <scope>FUNCTION</scope>
    <scope>DISRUPTION PHENOTYPE</scope>
</reference>
<reference evidence="13 14 15 16 17" key="9">
    <citation type="journal article" date="2022" name="Structure">
        <title>Rieske head domain dynamics and indazole-derivative inhibition of Candida albicans complex III.</title>
        <authorList>
            <person name="Di Trani J.M."/>
            <person name="Liu Z."/>
            <person name="Whitesell L."/>
            <person name="Brzezinski P."/>
            <person name="Cowen L.E."/>
            <person name="Rubinstein J.L."/>
        </authorList>
    </citation>
    <scope>STRUCTURE BY ELECTRON MICROSCOPY (3.00 ANGSTROMS) OF THE HOMODIMERIC RESPIRATORY COMPLEX III</scope>
    <scope>FUNCTION</scope>
    <scope>SUBUNIT</scope>
</reference>
<feature type="chain" id="PRO_0000459228" description="Cytochrome b-c1 complex catalytic subunit, mitochondrial">
    <location>
        <begin position="1"/>
        <end position="288"/>
    </location>
</feature>
<feature type="transmembrane region" description="Helical" evidence="2">
    <location>
        <begin position="12"/>
        <end position="34"/>
    </location>
</feature>
<feature type="transmembrane region" description="Helical" evidence="2">
    <location>
        <begin position="250"/>
        <end position="268"/>
    </location>
</feature>
<feature type="domain" description="Cytochrome c" evidence="3">
    <location>
        <begin position="69"/>
        <end position="222"/>
    </location>
</feature>
<feature type="region of interest" description="Disordered" evidence="4">
    <location>
        <begin position="111"/>
        <end position="138"/>
    </location>
</feature>
<feature type="compositionally biased region" description="Acidic residues" evidence="4">
    <location>
        <begin position="111"/>
        <end position="121"/>
    </location>
</feature>
<feature type="binding site" description="covalent" evidence="3">
    <location>
        <position position="82"/>
    </location>
    <ligand>
        <name>heme c</name>
        <dbReference type="ChEBI" id="CHEBI:61717"/>
    </ligand>
</feature>
<feature type="binding site" description="covalent" evidence="3">
    <location>
        <position position="85"/>
    </location>
    <ligand>
        <name>heme c</name>
        <dbReference type="ChEBI" id="CHEBI:61717"/>
    </ligand>
</feature>
<feature type="binding site" description="axial binding residue" evidence="3">
    <location>
        <position position="86"/>
    </location>
    <ligand>
        <name>heme c</name>
        <dbReference type="ChEBI" id="CHEBI:61717"/>
    </ligand>
    <ligandPart>
        <name>Fe</name>
        <dbReference type="ChEBI" id="CHEBI:18248"/>
    </ligandPart>
</feature>
<feature type="helix" evidence="18">
    <location>
        <begin position="45"/>
        <end position="48"/>
    </location>
</feature>
<feature type="helix" evidence="18">
    <location>
        <begin position="68"/>
        <end position="80"/>
    </location>
</feature>
<feature type="helix" evidence="18">
    <location>
        <begin position="82"/>
        <end position="84"/>
    </location>
</feature>
<feature type="helix" evidence="18">
    <location>
        <begin position="93"/>
        <end position="96"/>
    </location>
</feature>
<feature type="turn" evidence="18">
    <location>
        <begin position="98"/>
        <end position="100"/>
    </location>
</feature>
<feature type="helix" evidence="18">
    <location>
        <begin position="103"/>
        <end position="111"/>
    </location>
</feature>
<feature type="strand" evidence="18">
    <location>
        <begin position="113"/>
        <end position="117"/>
    </location>
</feature>
<feature type="turn" evidence="19">
    <location>
        <begin position="121"/>
        <end position="123"/>
    </location>
</feature>
<feature type="strand" evidence="18">
    <location>
        <begin position="126"/>
        <end position="129"/>
    </location>
</feature>
<feature type="strand" evidence="18">
    <location>
        <begin position="139"/>
        <end position="142"/>
    </location>
</feature>
<feature type="helix" evidence="18">
    <location>
        <begin position="143"/>
        <end position="149"/>
    </location>
</feature>
<feature type="turn" evidence="18">
    <location>
        <begin position="150"/>
        <end position="152"/>
    </location>
</feature>
<feature type="helix" evidence="18">
    <location>
        <begin position="158"/>
        <end position="160"/>
    </location>
</feature>
<feature type="turn" evidence="18">
    <location>
        <begin position="161"/>
        <end position="164"/>
    </location>
</feature>
<feature type="turn" evidence="18">
    <location>
        <begin position="166"/>
        <end position="168"/>
    </location>
</feature>
<feature type="helix" evidence="18">
    <location>
        <begin position="169"/>
        <end position="176"/>
    </location>
</feature>
<feature type="strand" evidence="18">
    <location>
        <begin position="202"/>
        <end position="206"/>
    </location>
</feature>
<feature type="helix" evidence="18">
    <location>
        <begin position="225"/>
        <end position="240"/>
    </location>
</feature>
<feature type="helix" evidence="18">
    <location>
        <begin position="244"/>
        <end position="277"/>
    </location>
</feature>
<feature type="strand" evidence="18">
    <location>
        <begin position="280"/>
        <end position="283"/>
    </location>
</feature>
<evidence type="ECO:0000250" key="1">
    <source>
        <dbReference type="UniProtKB" id="P07143"/>
    </source>
</evidence>
<evidence type="ECO:0000255" key="2"/>
<evidence type="ECO:0000255" key="3">
    <source>
        <dbReference type="PROSITE-ProRule" id="PRU00433"/>
    </source>
</evidence>
<evidence type="ECO:0000256" key="4">
    <source>
        <dbReference type="SAM" id="MobiDB-lite"/>
    </source>
</evidence>
<evidence type="ECO:0000269" key="5">
    <source>
    </source>
</evidence>
<evidence type="ECO:0000269" key="6">
    <source>
    </source>
</evidence>
<evidence type="ECO:0000269" key="7">
    <source>
    </source>
</evidence>
<evidence type="ECO:0000269" key="8">
    <source>
    </source>
</evidence>
<evidence type="ECO:0000269" key="9">
    <source>
    </source>
</evidence>
<evidence type="ECO:0000269" key="10">
    <source>
    </source>
</evidence>
<evidence type="ECO:0000303" key="11">
    <source>
    </source>
</evidence>
<evidence type="ECO:0000305" key="12"/>
<evidence type="ECO:0007744" key="13">
    <source>
        <dbReference type="PDB" id="7RJA"/>
    </source>
</evidence>
<evidence type="ECO:0007744" key="14">
    <source>
        <dbReference type="PDB" id="7RJB"/>
    </source>
</evidence>
<evidence type="ECO:0007744" key="15">
    <source>
        <dbReference type="PDB" id="7RJC"/>
    </source>
</evidence>
<evidence type="ECO:0007744" key="16">
    <source>
        <dbReference type="PDB" id="7RJD"/>
    </source>
</evidence>
<evidence type="ECO:0007744" key="17">
    <source>
        <dbReference type="PDB" id="7RJE"/>
    </source>
</evidence>
<evidence type="ECO:0007829" key="18">
    <source>
        <dbReference type="PDB" id="7RJA"/>
    </source>
</evidence>
<evidence type="ECO:0007829" key="19">
    <source>
        <dbReference type="PDB" id="7RJE"/>
    </source>
</evidence>
<accession>A0A1D8PHA3</accession>
<gene>
    <name evidence="11" type="primary">CYT1</name>
    <name type="synonym">CYT12</name>
    <name type="ordered locus">CAALFM_C204950CA</name>
    <name type="ordered locus">orf19.11011</name>
</gene>
<name>CYT1_CANAL</name>
<organism>
    <name type="scientific">Candida albicans (strain SC5314 / ATCC MYA-2876)</name>
    <name type="common">Yeast</name>
    <dbReference type="NCBI Taxonomy" id="237561"/>
    <lineage>
        <taxon>Eukaryota</taxon>
        <taxon>Fungi</taxon>
        <taxon>Dikarya</taxon>
        <taxon>Ascomycota</taxon>
        <taxon>Saccharomycotina</taxon>
        <taxon>Pichiomycetes</taxon>
        <taxon>Debaryomycetaceae</taxon>
        <taxon>Candida/Lodderomyces clade</taxon>
        <taxon>Candida</taxon>
    </lineage>
</organism>
<protein>
    <recommendedName>
        <fullName evidence="11">Cytochrome b-c1 complex catalytic subunit, mitochondrial</fullName>
        <ecNumber evidence="1">7.1.1.8</ecNumber>
    </recommendedName>
    <alternativeName>
        <fullName evidence="11">Complex III catalytic subunit</fullName>
    </alternativeName>
</protein>